<protein>
    <recommendedName>
        <fullName>UDP-N-acetylglucosamine 1-carboxyvinyltransferase</fullName>
        <ecNumber>2.5.1.7</ecNumber>
    </recommendedName>
    <alternativeName>
        <fullName>Enoylpyruvate transferase</fullName>
    </alternativeName>
    <alternativeName>
        <fullName>UDP-N-acetylglucosamine enolpyruvyl transferase</fullName>
        <shortName>EPT</shortName>
    </alternativeName>
</protein>
<gene>
    <name type="primary">murA</name>
</gene>
<keyword id="KW-0131">Cell cycle</keyword>
<keyword id="KW-0132">Cell division</keyword>
<keyword id="KW-0133">Cell shape</keyword>
<keyword id="KW-0961">Cell wall biogenesis/degradation</keyword>
<keyword id="KW-0963">Cytoplasm</keyword>
<keyword id="KW-0573">Peptidoglycan synthesis</keyword>
<keyword id="KW-0808">Transferase</keyword>
<organism>
    <name type="scientific">Mycobacteroides chelonae</name>
    <name type="common">Mycobacterium chelonae</name>
    <dbReference type="NCBI Taxonomy" id="1774"/>
    <lineage>
        <taxon>Bacteria</taxon>
        <taxon>Bacillati</taxon>
        <taxon>Actinomycetota</taxon>
        <taxon>Actinomycetes</taxon>
        <taxon>Mycobacteriales</taxon>
        <taxon>Mycobacteriaceae</taxon>
        <taxon>Mycobacteroides</taxon>
    </lineage>
</organism>
<accession>O32857</accession>
<feature type="chain" id="PRO_0000178893" description="UDP-N-acetylglucosamine 1-carboxyvinyltransferase">
    <location>
        <begin position="1" status="less than"/>
        <end position="90"/>
    </location>
</feature>
<feature type="non-terminal residue">
    <location>
        <position position="1"/>
    </location>
</feature>
<proteinExistence type="inferred from homology"/>
<name>MURA_MYCCH</name>
<reference key="1">
    <citation type="journal article" date="1997" name="J. Bacteriol.">
        <title>Strategies used by pathogenic and nonpathogenic mycobacteria to synthesize rRNA.</title>
        <authorList>
            <person name="Gonzalez-y-Merchand J.A."/>
            <person name="Garcia M.J."/>
            <person name="Gonzalez-Rico S."/>
            <person name="Colston M.J."/>
            <person name="Cox R.A."/>
        </authorList>
    </citation>
    <scope>NUCLEOTIDE SEQUENCE [GENOMIC DNA]</scope>
    <source>
        <strain>ATCC 35752 / DSM 43804 / JCM 6388 / KCTC 9505 / NCIMB 1474 / NCTC 946 / TMC 1544 / Friedmann / RAMC</strain>
    </source>
</reference>
<evidence type="ECO:0000250" key="1"/>
<evidence type="ECO:0000305" key="2"/>
<dbReference type="EC" id="2.5.1.7"/>
<dbReference type="EMBL" id="Y13911">
    <property type="protein sequence ID" value="CAA74209.1"/>
    <property type="molecule type" value="Genomic_DNA"/>
</dbReference>
<dbReference type="SMR" id="O32857"/>
<dbReference type="STRING" id="1774.GR01_06785"/>
<dbReference type="UniPathway" id="UPA00219"/>
<dbReference type="GO" id="GO:0005737">
    <property type="term" value="C:cytoplasm"/>
    <property type="evidence" value="ECO:0007669"/>
    <property type="project" value="UniProtKB-SubCell"/>
</dbReference>
<dbReference type="GO" id="GO:0008760">
    <property type="term" value="F:UDP-N-acetylglucosamine 1-carboxyvinyltransferase activity"/>
    <property type="evidence" value="ECO:0007669"/>
    <property type="project" value="UniProtKB-EC"/>
</dbReference>
<dbReference type="GO" id="GO:0051301">
    <property type="term" value="P:cell division"/>
    <property type="evidence" value="ECO:0007669"/>
    <property type="project" value="UniProtKB-KW"/>
</dbReference>
<dbReference type="GO" id="GO:0071555">
    <property type="term" value="P:cell wall organization"/>
    <property type="evidence" value="ECO:0007669"/>
    <property type="project" value="UniProtKB-KW"/>
</dbReference>
<dbReference type="GO" id="GO:0009252">
    <property type="term" value="P:peptidoglycan biosynthetic process"/>
    <property type="evidence" value="ECO:0007669"/>
    <property type="project" value="UniProtKB-UniPathway"/>
</dbReference>
<dbReference type="GO" id="GO:0008360">
    <property type="term" value="P:regulation of cell shape"/>
    <property type="evidence" value="ECO:0007669"/>
    <property type="project" value="UniProtKB-KW"/>
</dbReference>
<dbReference type="Gene3D" id="3.65.10.10">
    <property type="entry name" value="Enolpyruvate transferase domain"/>
    <property type="match status" value="1"/>
</dbReference>
<dbReference type="InterPro" id="IPR001986">
    <property type="entry name" value="Enolpyruvate_Tfrase_dom"/>
</dbReference>
<dbReference type="InterPro" id="IPR036968">
    <property type="entry name" value="Enolpyruvate_Tfrase_sf"/>
</dbReference>
<dbReference type="InterPro" id="IPR050068">
    <property type="entry name" value="MurA_subfamily"/>
</dbReference>
<dbReference type="InterPro" id="IPR013792">
    <property type="entry name" value="RNA3'P_cycl/enolpyr_Trfase_a/b"/>
</dbReference>
<dbReference type="PANTHER" id="PTHR43783">
    <property type="entry name" value="UDP-N-ACETYLGLUCOSAMINE 1-CARBOXYVINYLTRANSFERASE"/>
    <property type="match status" value="1"/>
</dbReference>
<dbReference type="PANTHER" id="PTHR43783:SF1">
    <property type="entry name" value="UDP-N-ACETYLGLUCOSAMINE 1-CARBOXYVINYLTRANSFERASE"/>
    <property type="match status" value="1"/>
</dbReference>
<dbReference type="Pfam" id="PF00275">
    <property type="entry name" value="EPSP_synthase"/>
    <property type="match status" value="1"/>
</dbReference>
<dbReference type="SUPFAM" id="SSF55205">
    <property type="entry name" value="EPT/RTPC-like"/>
    <property type="match status" value="1"/>
</dbReference>
<sequence>FEARFRFVEEIIRWGADARTDGHHAVVRGIRQLSSAPVWSSDIRAGAGLVLAGLVADGVTEVYDVFHIDRGYPLFVENLQSLGAEVERVS</sequence>
<comment type="function">
    <text evidence="1">Cell wall formation. Adds enolpyruvyl to UDP-N-acetylglucosamine (By similarity).</text>
</comment>
<comment type="catalytic activity">
    <reaction>
        <text>phosphoenolpyruvate + UDP-N-acetyl-alpha-D-glucosamine = UDP-N-acetyl-3-O-(1-carboxyvinyl)-alpha-D-glucosamine + phosphate</text>
        <dbReference type="Rhea" id="RHEA:18681"/>
        <dbReference type="ChEBI" id="CHEBI:43474"/>
        <dbReference type="ChEBI" id="CHEBI:57705"/>
        <dbReference type="ChEBI" id="CHEBI:58702"/>
        <dbReference type="ChEBI" id="CHEBI:68483"/>
        <dbReference type="EC" id="2.5.1.7"/>
    </reaction>
</comment>
<comment type="pathway">
    <text>Cell wall biogenesis; peptidoglycan biosynthesis.</text>
</comment>
<comment type="subcellular location">
    <subcellularLocation>
        <location evidence="1">Cytoplasm</location>
    </subcellularLocation>
</comment>
<comment type="similarity">
    <text evidence="2">Belongs to the EPSP synthase family. MurA subfamily.</text>
</comment>